<keyword id="KW-0342">GTP-binding</keyword>
<keyword id="KW-0547">Nucleotide-binding</keyword>
<keyword id="KW-0548">Nucleotidyltransferase</keyword>
<keyword id="KW-0808">Transferase</keyword>
<comment type="function">
    <text evidence="1">Guanylyltransferase that catalyzes the activation of phosphoenolpyruvate (PEP) as enolpyruvoyl-2-diphospho-5'-guanosine, via the condensation of PEP with GTP. It is involved in the biosynthesis of coenzyme F420, a hydride carrier cofactor.</text>
</comment>
<comment type="catalytic activity">
    <reaction evidence="1">
        <text>phosphoenolpyruvate + GTP + H(+) = enolpyruvoyl-2-diphospho-5'-guanosine + diphosphate</text>
        <dbReference type="Rhea" id="RHEA:30519"/>
        <dbReference type="ChEBI" id="CHEBI:15378"/>
        <dbReference type="ChEBI" id="CHEBI:33019"/>
        <dbReference type="ChEBI" id="CHEBI:37565"/>
        <dbReference type="ChEBI" id="CHEBI:58702"/>
        <dbReference type="ChEBI" id="CHEBI:143701"/>
        <dbReference type="EC" id="2.7.7.105"/>
    </reaction>
</comment>
<comment type="pathway">
    <text evidence="1">Cofactor biosynthesis; coenzyme F420 biosynthesis.</text>
</comment>
<comment type="miscellaneous">
    <text evidence="2">The exact nature of the substrate is currently not known. This entry has been annotated based on its similarity to Actinobacteria.</text>
</comment>
<comment type="similarity">
    <text evidence="1">Belongs to the CofC family.</text>
</comment>
<sequence>MVIHAIVPVKELHRAKQRLARVLDAHERRALSLAMLNDVLVALSYSPVSRIIVIGRDVETGHTARAHGAAFVIDQSAALNDALHQAAADIPDHAAALVAPSDLPLLGAEDVIALTCISGDKPGVAIAPAHDGGTNLLLVSPVVGWTFLFGPDSLTHHIAAARQRHLPVHLLRLPHLERDIDDIDDLIWLAQQPGDTSAQRLARMFLERKGAQLWQSSDMPPH</sequence>
<gene>
    <name evidence="1" type="primary">fbiD</name>
    <name type="ordered locus">RoseRS_1139</name>
</gene>
<accession>A5USE3</accession>
<organism>
    <name type="scientific">Roseiflexus sp. (strain RS-1)</name>
    <dbReference type="NCBI Taxonomy" id="357808"/>
    <lineage>
        <taxon>Bacteria</taxon>
        <taxon>Bacillati</taxon>
        <taxon>Chloroflexota</taxon>
        <taxon>Chloroflexia</taxon>
        <taxon>Chloroflexales</taxon>
        <taxon>Roseiflexineae</taxon>
        <taxon>Roseiflexaceae</taxon>
        <taxon>Roseiflexus</taxon>
    </lineage>
</organism>
<protein>
    <recommendedName>
        <fullName evidence="1">Phosphoenolpyruvate guanylyltransferase</fullName>
        <shortName evidence="1">PEP guanylyltransferase</shortName>
        <ecNumber evidence="1">2.7.7.105</ecNumber>
    </recommendedName>
</protein>
<dbReference type="EC" id="2.7.7.105" evidence="1"/>
<dbReference type="EMBL" id="CP000686">
    <property type="protein sequence ID" value="ABQ89546.1"/>
    <property type="molecule type" value="Genomic_DNA"/>
</dbReference>
<dbReference type="SMR" id="A5USE3"/>
<dbReference type="STRING" id="357808.RoseRS_1139"/>
<dbReference type="KEGG" id="rrs:RoseRS_1139"/>
<dbReference type="eggNOG" id="COG1920">
    <property type="taxonomic scope" value="Bacteria"/>
</dbReference>
<dbReference type="HOGENOM" id="CLU_076569_1_0_0"/>
<dbReference type="OrthoDB" id="9151145at2"/>
<dbReference type="UniPathway" id="UPA00071"/>
<dbReference type="Proteomes" id="UP000006554">
    <property type="component" value="Chromosome"/>
</dbReference>
<dbReference type="GO" id="GO:0005525">
    <property type="term" value="F:GTP binding"/>
    <property type="evidence" value="ECO:0007669"/>
    <property type="project" value="UniProtKB-KW"/>
</dbReference>
<dbReference type="GO" id="GO:0043814">
    <property type="term" value="F:phospholactate guanylyltransferase activity"/>
    <property type="evidence" value="ECO:0007669"/>
    <property type="project" value="InterPro"/>
</dbReference>
<dbReference type="GO" id="GO:0052645">
    <property type="term" value="P:F420-0 metabolic process"/>
    <property type="evidence" value="ECO:0007669"/>
    <property type="project" value="UniProtKB-UniRule"/>
</dbReference>
<dbReference type="Gene3D" id="3.90.550.10">
    <property type="entry name" value="Spore Coat Polysaccharide Biosynthesis Protein SpsA, Chain A"/>
    <property type="match status" value="1"/>
</dbReference>
<dbReference type="HAMAP" id="MF_02114">
    <property type="entry name" value="CofC"/>
    <property type="match status" value="1"/>
</dbReference>
<dbReference type="InterPro" id="IPR002835">
    <property type="entry name" value="CofC"/>
</dbReference>
<dbReference type="InterPro" id="IPR029044">
    <property type="entry name" value="Nucleotide-diphossugar_trans"/>
</dbReference>
<dbReference type="NCBIfam" id="TIGR03552">
    <property type="entry name" value="F420_cofC"/>
    <property type="match status" value="1"/>
</dbReference>
<dbReference type="PANTHER" id="PTHR40392">
    <property type="entry name" value="2-PHOSPHO-L-LACTATE GUANYLYLTRANSFERASE"/>
    <property type="match status" value="1"/>
</dbReference>
<dbReference type="PANTHER" id="PTHR40392:SF1">
    <property type="entry name" value="2-PHOSPHO-L-LACTATE GUANYLYLTRANSFERASE"/>
    <property type="match status" value="1"/>
</dbReference>
<dbReference type="Pfam" id="PF01983">
    <property type="entry name" value="CofC"/>
    <property type="match status" value="1"/>
</dbReference>
<dbReference type="SUPFAM" id="SSF53448">
    <property type="entry name" value="Nucleotide-diphospho-sugar transferases"/>
    <property type="match status" value="1"/>
</dbReference>
<name>FBID_ROSS1</name>
<reference key="1">
    <citation type="submission" date="2007-04" db="EMBL/GenBank/DDBJ databases">
        <title>Complete sequence of Roseiflexus sp. RS-1.</title>
        <authorList>
            <consortium name="US DOE Joint Genome Institute"/>
            <person name="Copeland A."/>
            <person name="Lucas S."/>
            <person name="Lapidus A."/>
            <person name="Barry K."/>
            <person name="Detter J.C."/>
            <person name="Glavina del Rio T."/>
            <person name="Hammon N."/>
            <person name="Israni S."/>
            <person name="Dalin E."/>
            <person name="Tice H."/>
            <person name="Pitluck S."/>
            <person name="Chertkov O."/>
            <person name="Brettin T."/>
            <person name="Bruce D."/>
            <person name="Han C."/>
            <person name="Schmutz J."/>
            <person name="Larimer F."/>
            <person name="Land M."/>
            <person name="Hauser L."/>
            <person name="Kyrpides N."/>
            <person name="Mikhailova N."/>
            <person name="Bryant D.A."/>
            <person name="Richardson P."/>
        </authorList>
    </citation>
    <scope>NUCLEOTIDE SEQUENCE [LARGE SCALE GENOMIC DNA]</scope>
    <source>
        <strain>RS-1</strain>
    </source>
</reference>
<feature type="chain" id="PRO_0000398710" description="Phosphoenolpyruvate guanylyltransferase">
    <location>
        <begin position="1"/>
        <end position="222"/>
    </location>
</feature>
<feature type="binding site" evidence="1">
    <location>
        <position position="134"/>
    </location>
    <ligand>
        <name>phosphoenolpyruvate</name>
        <dbReference type="ChEBI" id="CHEBI:58702"/>
    </ligand>
</feature>
<feature type="binding site" evidence="1">
    <location>
        <position position="150"/>
    </location>
    <ligand>
        <name>phosphoenolpyruvate</name>
        <dbReference type="ChEBI" id="CHEBI:58702"/>
    </ligand>
</feature>
<feature type="binding site" evidence="1">
    <location>
        <position position="153"/>
    </location>
    <ligand>
        <name>phosphoenolpyruvate</name>
        <dbReference type="ChEBI" id="CHEBI:58702"/>
    </ligand>
</feature>
<evidence type="ECO:0000255" key="1">
    <source>
        <dbReference type="HAMAP-Rule" id="MF_02114"/>
    </source>
</evidence>
<evidence type="ECO:0000305" key="2"/>
<proteinExistence type="inferred from homology"/>